<reference key="1">
    <citation type="submission" date="2006-09" db="EMBL/GenBank/DDBJ databases">
        <title>Complete sequence of Rhodopseudomonas palustris BisA53.</title>
        <authorList>
            <consortium name="US DOE Joint Genome Institute"/>
            <person name="Copeland A."/>
            <person name="Lucas S."/>
            <person name="Lapidus A."/>
            <person name="Barry K."/>
            <person name="Detter J.C."/>
            <person name="Glavina del Rio T."/>
            <person name="Hammon N."/>
            <person name="Israni S."/>
            <person name="Dalin E."/>
            <person name="Tice H."/>
            <person name="Pitluck S."/>
            <person name="Chain P."/>
            <person name="Malfatti S."/>
            <person name="Shin M."/>
            <person name="Vergez L."/>
            <person name="Schmutz J."/>
            <person name="Larimer F."/>
            <person name="Land M."/>
            <person name="Hauser L."/>
            <person name="Pelletier D.A."/>
            <person name="Kyrpides N."/>
            <person name="Kim E."/>
            <person name="Harwood C.S."/>
            <person name="Oda Y."/>
            <person name="Richardson P."/>
        </authorList>
    </citation>
    <scope>NUCLEOTIDE SEQUENCE [LARGE SCALE GENOMIC DNA]</scope>
    <source>
        <strain>BisA53</strain>
    </source>
</reference>
<keyword id="KW-0963">Cytoplasm</keyword>
<keyword id="KW-0489">Methyltransferase</keyword>
<keyword id="KW-0698">rRNA processing</keyword>
<keyword id="KW-0949">S-adenosyl-L-methionine</keyword>
<keyword id="KW-0808">Transferase</keyword>
<proteinExistence type="inferred from homology"/>
<organism>
    <name type="scientific">Rhodopseudomonas palustris (strain BisA53)</name>
    <dbReference type="NCBI Taxonomy" id="316055"/>
    <lineage>
        <taxon>Bacteria</taxon>
        <taxon>Pseudomonadati</taxon>
        <taxon>Pseudomonadota</taxon>
        <taxon>Alphaproteobacteria</taxon>
        <taxon>Hyphomicrobiales</taxon>
        <taxon>Nitrobacteraceae</taxon>
        <taxon>Rhodopseudomonas</taxon>
    </lineage>
</organism>
<sequence>MAKDSTGRMRVTVKSAGRMKLSSKLWLERQLNDPYVAQAKRDGYRSRAAYKLLEIDDKHHFLKPGASVVDLGAAPGGWSQIAAKRVGATEGKGKVVAIDLLEMPEIVGVTFAQLDFLSPAAPEKLLAMIGGRVDVVMSDMAANTTGHRKTDQLRIVGLVEDAAAFACDVLKPGGTFVAKVFQSGADATLMTQLKRDFASVKHLKPQASRKDSSERYVLALGFRGPETTNWSNPPD</sequence>
<protein>
    <recommendedName>
        <fullName evidence="1">Ribosomal RNA large subunit methyltransferase E</fullName>
        <ecNumber evidence="1">2.1.1.166</ecNumber>
    </recommendedName>
    <alternativeName>
        <fullName evidence="1">23S rRNA Um2552 methyltransferase</fullName>
    </alternativeName>
    <alternativeName>
        <fullName evidence="1">rRNA (uridine-2'-O-)-methyltransferase</fullName>
    </alternativeName>
</protein>
<dbReference type="EC" id="2.1.1.166" evidence="1"/>
<dbReference type="EMBL" id="CP000463">
    <property type="protein sequence ID" value="ABJ07205.1"/>
    <property type="molecule type" value="Genomic_DNA"/>
</dbReference>
<dbReference type="SMR" id="Q07LH9"/>
<dbReference type="STRING" id="316055.RPE_3272"/>
<dbReference type="KEGG" id="rpe:RPE_3272"/>
<dbReference type="eggNOG" id="COG0293">
    <property type="taxonomic scope" value="Bacteria"/>
</dbReference>
<dbReference type="HOGENOM" id="CLU_009422_4_0_5"/>
<dbReference type="OrthoDB" id="9790080at2"/>
<dbReference type="GO" id="GO:0005737">
    <property type="term" value="C:cytoplasm"/>
    <property type="evidence" value="ECO:0007669"/>
    <property type="project" value="UniProtKB-SubCell"/>
</dbReference>
<dbReference type="GO" id="GO:0008650">
    <property type="term" value="F:rRNA (uridine-2'-O-)-methyltransferase activity"/>
    <property type="evidence" value="ECO:0007669"/>
    <property type="project" value="UniProtKB-UniRule"/>
</dbReference>
<dbReference type="CDD" id="cd02440">
    <property type="entry name" value="AdoMet_MTases"/>
    <property type="match status" value="1"/>
</dbReference>
<dbReference type="FunFam" id="3.40.50.150:FF:000005">
    <property type="entry name" value="Ribosomal RNA large subunit methyltransferase E"/>
    <property type="match status" value="1"/>
</dbReference>
<dbReference type="Gene3D" id="3.40.50.150">
    <property type="entry name" value="Vaccinia Virus protein VP39"/>
    <property type="match status" value="1"/>
</dbReference>
<dbReference type="HAMAP" id="MF_01547">
    <property type="entry name" value="RNA_methyltr_E"/>
    <property type="match status" value="1"/>
</dbReference>
<dbReference type="InterPro" id="IPR050082">
    <property type="entry name" value="RNA_methyltr_RlmE"/>
</dbReference>
<dbReference type="InterPro" id="IPR002877">
    <property type="entry name" value="RNA_MeTrfase_FtsJ_dom"/>
</dbReference>
<dbReference type="InterPro" id="IPR015507">
    <property type="entry name" value="rRNA-MeTfrase_E"/>
</dbReference>
<dbReference type="InterPro" id="IPR029063">
    <property type="entry name" value="SAM-dependent_MTases_sf"/>
</dbReference>
<dbReference type="PANTHER" id="PTHR10920">
    <property type="entry name" value="RIBOSOMAL RNA METHYLTRANSFERASE"/>
    <property type="match status" value="1"/>
</dbReference>
<dbReference type="PANTHER" id="PTHR10920:SF18">
    <property type="entry name" value="RRNA METHYLTRANSFERASE 2, MITOCHONDRIAL"/>
    <property type="match status" value="1"/>
</dbReference>
<dbReference type="Pfam" id="PF01728">
    <property type="entry name" value="FtsJ"/>
    <property type="match status" value="1"/>
</dbReference>
<dbReference type="PIRSF" id="PIRSF005461">
    <property type="entry name" value="23S_rRNA_mtase"/>
    <property type="match status" value="1"/>
</dbReference>
<dbReference type="SUPFAM" id="SSF53335">
    <property type="entry name" value="S-adenosyl-L-methionine-dependent methyltransferases"/>
    <property type="match status" value="1"/>
</dbReference>
<feature type="chain" id="PRO_0000282786" description="Ribosomal RNA large subunit methyltransferase E">
    <location>
        <begin position="1"/>
        <end position="235"/>
    </location>
</feature>
<feature type="active site" description="Proton acceptor" evidence="1">
    <location>
        <position position="179"/>
    </location>
</feature>
<feature type="binding site" evidence="1">
    <location>
        <position position="76"/>
    </location>
    <ligand>
        <name>S-adenosyl-L-methionine</name>
        <dbReference type="ChEBI" id="CHEBI:59789"/>
    </ligand>
</feature>
<feature type="binding site" evidence="1">
    <location>
        <position position="78"/>
    </location>
    <ligand>
        <name>S-adenosyl-L-methionine</name>
        <dbReference type="ChEBI" id="CHEBI:59789"/>
    </ligand>
</feature>
<feature type="binding site" evidence="1">
    <location>
        <position position="99"/>
    </location>
    <ligand>
        <name>S-adenosyl-L-methionine</name>
        <dbReference type="ChEBI" id="CHEBI:59789"/>
    </ligand>
</feature>
<feature type="binding site" evidence="1">
    <location>
        <position position="115"/>
    </location>
    <ligand>
        <name>S-adenosyl-L-methionine</name>
        <dbReference type="ChEBI" id="CHEBI:59789"/>
    </ligand>
</feature>
<feature type="binding site" evidence="1">
    <location>
        <position position="139"/>
    </location>
    <ligand>
        <name>S-adenosyl-L-methionine</name>
        <dbReference type="ChEBI" id="CHEBI:59789"/>
    </ligand>
</feature>
<comment type="function">
    <text evidence="1">Specifically methylates the uridine in position 2552 of 23S rRNA at the 2'-O position of the ribose in the fully assembled 50S ribosomal subunit.</text>
</comment>
<comment type="catalytic activity">
    <reaction evidence="1">
        <text>uridine(2552) in 23S rRNA + S-adenosyl-L-methionine = 2'-O-methyluridine(2552) in 23S rRNA + S-adenosyl-L-homocysteine + H(+)</text>
        <dbReference type="Rhea" id="RHEA:42720"/>
        <dbReference type="Rhea" id="RHEA-COMP:10202"/>
        <dbReference type="Rhea" id="RHEA-COMP:10203"/>
        <dbReference type="ChEBI" id="CHEBI:15378"/>
        <dbReference type="ChEBI" id="CHEBI:57856"/>
        <dbReference type="ChEBI" id="CHEBI:59789"/>
        <dbReference type="ChEBI" id="CHEBI:65315"/>
        <dbReference type="ChEBI" id="CHEBI:74478"/>
        <dbReference type="EC" id="2.1.1.166"/>
    </reaction>
</comment>
<comment type="subcellular location">
    <subcellularLocation>
        <location evidence="1">Cytoplasm</location>
    </subcellularLocation>
</comment>
<comment type="similarity">
    <text evidence="1">Belongs to the class I-like SAM-binding methyltransferase superfamily. RNA methyltransferase RlmE family.</text>
</comment>
<accession>Q07LH9</accession>
<name>RLME_RHOP5</name>
<evidence type="ECO:0000255" key="1">
    <source>
        <dbReference type="HAMAP-Rule" id="MF_01547"/>
    </source>
</evidence>
<gene>
    <name evidence="1" type="primary">rlmE</name>
    <name evidence="1" type="synonym">ftsJ</name>
    <name evidence="1" type="synonym">rrmJ</name>
    <name type="ordered locus">RPE_3272</name>
</gene>